<dbReference type="EC" id="3.6.5.n1" evidence="1"/>
<dbReference type="EMBL" id="CP000419">
    <property type="protein sequence ID" value="ABJ66155.1"/>
    <property type="molecule type" value="Genomic_DNA"/>
</dbReference>
<dbReference type="RefSeq" id="WP_011227164.1">
    <property type="nucleotide sequence ID" value="NC_008532.1"/>
</dbReference>
<dbReference type="SMR" id="Q03KW7"/>
<dbReference type="GeneID" id="66898781"/>
<dbReference type="KEGG" id="ste:STER_0932"/>
<dbReference type="HOGENOM" id="CLU_009995_3_3_9"/>
<dbReference type="GO" id="GO:0005886">
    <property type="term" value="C:plasma membrane"/>
    <property type="evidence" value="ECO:0007669"/>
    <property type="project" value="UniProtKB-SubCell"/>
</dbReference>
<dbReference type="GO" id="GO:0005525">
    <property type="term" value="F:GTP binding"/>
    <property type="evidence" value="ECO:0007669"/>
    <property type="project" value="UniProtKB-UniRule"/>
</dbReference>
<dbReference type="GO" id="GO:0003924">
    <property type="term" value="F:GTPase activity"/>
    <property type="evidence" value="ECO:0007669"/>
    <property type="project" value="UniProtKB-UniRule"/>
</dbReference>
<dbReference type="GO" id="GO:0043022">
    <property type="term" value="F:ribosome binding"/>
    <property type="evidence" value="ECO:0007669"/>
    <property type="project" value="UniProtKB-UniRule"/>
</dbReference>
<dbReference type="GO" id="GO:0003746">
    <property type="term" value="F:translation elongation factor activity"/>
    <property type="evidence" value="ECO:0007669"/>
    <property type="project" value="UniProtKB-UniRule"/>
</dbReference>
<dbReference type="GO" id="GO:0045727">
    <property type="term" value="P:positive regulation of translation"/>
    <property type="evidence" value="ECO:0007669"/>
    <property type="project" value="UniProtKB-UniRule"/>
</dbReference>
<dbReference type="CDD" id="cd03699">
    <property type="entry name" value="EF4_II"/>
    <property type="match status" value="1"/>
</dbReference>
<dbReference type="CDD" id="cd16260">
    <property type="entry name" value="EF4_III"/>
    <property type="match status" value="1"/>
</dbReference>
<dbReference type="CDD" id="cd01890">
    <property type="entry name" value="LepA"/>
    <property type="match status" value="1"/>
</dbReference>
<dbReference type="CDD" id="cd03709">
    <property type="entry name" value="lepA_C"/>
    <property type="match status" value="1"/>
</dbReference>
<dbReference type="FunFam" id="3.40.50.300:FF:000078">
    <property type="entry name" value="Elongation factor 4"/>
    <property type="match status" value="1"/>
</dbReference>
<dbReference type="FunFam" id="2.40.30.10:FF:000015">
    <property type="entry name" value="Translation factor GUF1, mitochondrial"/>
    <property type="match status" value="1"/>
</dbReference>
<dbReference type="FunFam" id="3.30.70.240:FF:000007">
    <property type="entry name" value="Translation factor GUF1, mitochondrial"/>
    <property type="match status" value="1"/>
</dbReference>
<dbReference type="FunFam" id="3.30.70.2570:FF:000001">
    <property type="entry name" value="Translation factor GUF1, mitochondrial"/>
    <property type="match status" value="1"/>
</dbReference>
<dbReference type="FunFam" id="3.30.70.870:FF:000004">
    <property type="entry name" value="Translation factor GUF1, mitochondrial"/>
    <property type="match status" value="1"/>
</dbReference>
<dbReference type="Gene3D" id="3.30.70.240">
    <property type="match status" value="1"/>
</dbReference>
<dbReference type="Gene3D" id="3.30.70.2570">
    <property type="entry name" value="Elongation factor 4, C-terminal domain"/>
    <property type="match status" value="1"/>
</dbReference>
<dbReference type="Gene3D" id="3.30.70.870">
    <property type="entry name" value="Elongation Factor G (Translational Gtpase), domain 3"/>
    <property type="match status" value="1"/>
</dbReference>
<dbReference type="Gene3D" id="3.40.50.300">
    <property type="entry name" value="P-loop containing nucleotide triphosphate hydrolases"/>
    <property type="match status" value="1"/>
</dbReference>
<dbReference type="Gene3D" id="2.40.30.10">
    <property type="entry name" value="Translation factors"/>
    <property type="match status" value="1"/>
</dbReference>
<dbReference type="HAMAP" id="MF_00071">
    <property type="entry name" value="LepA"/>
    <property type="match status" value="1"/>
</dbReference>
<dbReference type="InterPro" id="IPR006297">
    <property type="entry name" value="EF-4"/>
</dbReference>
<dbReference type="InterPro" id="IPR035647">
    <property type="entry name" value="EFG_III/V"/>
</dbReference>
<dbReference type="InterPro" id="IPR000640">
    <property type="entry name" value="EFG_V-like"/>
</dbReference>
<dbReference type="InterPro" id="IPR004161">
    <property type="entry name" value="EFTu-like_2"/>
</dbReference>
<dbReference type="InterPro" id="IPR031157">
    <property type="entry name" value="G_TR_CS"/>
</dbReference>
<dbReference type="InterPro" id="IPR038363">
    <property type="entry name" value="LepA_C_sf"/>
</dbReference>
<dbReference type="InterPro" id="IPR013842">
    <property type="entry name" value="LepA_CTD"/>
</dbReference>
<dbReference type="InterPro" id="IPR035654">
    <property type="entry name" value="LepA_IV"/>
</dbReference>
<dbReference type="InterPro" id="IPR027417">
    <property type="entry name" value="P-loop_NTPase"/>
</dbReference>
<dbReference type="InterPro" id="IPR005225">
    <property type="entry name" value="Small_GTP-bd"/>
</dbReference>
<dbReference type="InterPro" id="IPR000795">
    <property type="entry name" value="T_Tr_GTP-bd_dom"/>
</dbReference>
<dbReference type="NCBIfam" id="TIGR01393">
    <property type="entry name" value="lepA"/>
    <property type="match status" value="1"/>
</dbReference>
<dbReference type="NCBIfam" id="TIGR00231">
    <property type="entry name" value="small_GTP"/>
    <property type="match status" value="1"/>
</dbReference>
<dbReference type="PANTHER" id="PTHR43512:SF4">
    <property type="entry name" value="TRANSLATION FACTOR GUF1 HOMOLOG, CHLOROPLASTIC"/>
    <property type="match status" value="1"/>
</dbReference>
<dbReference type="PANTHER" id="PTHR43512">
    <property type="entry name" value="TRANSLATION FACTOR GUF1-RELATED"/>
    <property type="match status" value="1"/>
</dbReference>
<dbReference type="Pfam" id="PF00679">
    <property type="entry name" value="EFG_C"/>
    <property type="match status" value="1"/>
</dbReference>
<dbReference type="Pfam" id="PF00009">
    <property type="entry name" value="GTP_EFTU"/>
    <property type="match status" value="1"/>
</dbReference>
<dbReference type="Pfam" id="PF03144">
    <property type="entry name" value="GTP_EFTU_D2"/>
    <property type="match status" value="1"/>
</dbReference>
<dbReference type="Pfam" id="PF06421">
    <property type="entry name" value="LepA_C"/>
    <property type="match status" value="1"/>
</dbReference>
<dbReference type="PRINTS" id="PR00315">
    <property type="entry name" value="ELONGATNFCT"/>
</dbReference>
<dbReference type="SMART" id="SM00838">
    <property type="entry name" value="EFG_C"/>
    <property type="match status" value="1"/>
</dbReference>
<dbReference type="SUPFAM" id="SSF54980">
    <property type="entry name" value="EF-G C-terminal domain-like"/>
    <property type="match status" value="2"/>
</dbReference>
<dbReference type="SUPFAM" id="SSF52540">
    <property type="entry name" value="P-loop containing nucleoside triphosphate hydrolases"/>
    <property type="match status" value="1"/>
</dbReference>
<dbReference type="PROSITE" id="PS00301">
    <property type="entry name" value="G_TR_1"/>
    <property type="match status" value="1"/>
</dbReference>
<dbReference type="PROSITE" id="PS51722">
    <property type="entry name" value="G_TR_2"/>
    <property type="match status" value="1"/>
</dbReference>
<sequence length="610" mass="68252">MPNIEELKQRQEKIRNFSIIAHIDHGKSTLADRILEKTETVSSREMQAQLLDSMDLERERGITIKLNAIELNYKAKDGETYIFHLIDTPGHVDFTYEVSRSLAACEGAILVVDAAQGIEAQTLANVYLALDNDLEILPVINKIDLPAADPERVRTEIEDVIGLDASEAVLASAKAGIGIEEILEQIVEKVPAPQGDVEAPLQALIFDSVYDAYRGVILQVRVVNGMVKTGDKIQMMSNGKTFDVTEVGIFTPKAVGRDYLATGDVGYVAASIKTVADTRVGDTVTLADNPAAEPLHGYKQMNPMVFAGLYPIESNKYNDLREALEKLQLNDASLQFEPETSQALGFGFRCGFLGLLHMDVIQERLEREFNIDLIMTAPSVVYHVNTTDGEMLEVSNPSEFPDPTRIDAIEEPYVKAQIMVPQEYVGAVMELAQRKRGDFETMEYIDDNRVNVIYQIPLAEIVFDFFDKLKSSTRGYASFDYELSEYRRSQLVKMDILLNGDKVDALSFIVHREFAYERGKLIVDKLKKIIPRQQFEVPIQAAIGQKIVARTDIKALRKNVLAKCYGGDVSRKRKLLEKQKAGKKRMKAIGSVEVPQEAFLSVLSMDEDEK</sequence>
<organism>
    <name type="scientific">Streptococcus thermophilus (strain ATCC BAA-491 / LMD-9)</name>
    <dbReference type="NCBI Taxonomy" id="322159"/>
    <lineage>
        <taxon>Bacteria</taxon>
        <taxon>Bacillati</taxon>
        <taxon>Bacillota</taxon>
        <taxon>Bacilli</taxon>
        <taxon>Lactobacillales</taxon>
        <taxon>Streptococcaceae</taxon>
        <taxon>Streptococcus</taxon>
    </lineage>
</organism>
<proteinExistence type="inferred from homology"/>
<keyword id="KW-1003">Cell membrane</keyword>
<keyword id="KW-0342">GTP-binding</keyword>
<keyword id="KW-0378">Hydrolase</keyword>
<keyword id="KW-0472">Membrane</keyword>
<keyword id="KW-0547">Nucleotide-binding</keyword>
<keyword id="KW-0648">Protein biosynthesis</keyword>
<reference key="1">
    <citation type="journal article" date="2006" name="Proc. Natl. Acad. Sci. U.S.A.">
        <title>Comparative genomics of the lactic acid bacteria.</title>
        <authorList>
            <person name="Makarova K.S."/>
            <person name="Slesarev A."/>
            <person name="Wolf Y.I."/>
            <person name="Sorokin A."/>
            <person name="Mirkin B."/>
            <person name="Koonin E.V."/>
            <person name="Pavlov A."/>
            <person name="Pavlova N."/>
            <person name="Karamychev V."/>
            <person name="Polouchine N."/>
            <person name="Shakhova V."/>
            <person name="Grigoriev I."/>
            <person name="Lou Y."/>
            <person name="Rohksar D."/>
            <person name="Lucas S."/>
            <person name="Huang K."/>
            <person name="Goodstein D.M."/>
            <person name="Hawkins T."/>
            <person name="Plengvidhya V."/>
            <person name="Welker D."/>
            <person name="Hughes J."/>
            <person name="Goh Y."/>
            <person name="Benson A."/>
            <person name="Baldwin K."/>
            <person name="Lee J.-H."/>
            <person name="Diaz-Muniz I."/>
            <person name="Dosti B."/>
            <person name="Smeianov V."/>
            <person name="Wechter W."/>
            <person name="Barabote R."/>
            <person name="Lorca G."/>
            <person name="Altermann E."/>
            <person name="Barrangou R."/>
            <person name="Ganesan B."/>
            <person name="Xie Y."/>
            <person name="Rawsthorne H."/>
            <person name="Tamir D."/>
            <person name="Parker C."/>
            <person name="Breidt F."/>
            <person name="Broadbent J.R."/>
            <person name="Hutkins R."/>
            <person name="O'Sullivan D."/>
            <person name="Steele J."/>
            <person name="Unlu G."/>
            <person name="Saier M.H. Jr."/>
            <person name="Klaenhammer T."/>
            <person name="Richardson P."/>
            <person name="Kozyavkin S."/>
            <person name="Weimer B.C."/>
            <person name="Mills D.A."/>
        </authorList>
    </citation>
    <scope>NUCLEOTIDE SEQUENCE [LARGE SCALE GENOMIC DNA]</scope>
    <source>
        <strain>ATCC BAA-491 / LMD-9</strain>
    </source>
</reference>
<protein>
    <recommendedName>
        <fullName evidence="1">Elongation factor 4</fullName>
        <shortName evidence="1">EF-4</shortName>
        <ecNumber evidence="1">3.6.5.n1</ecNumber>
    </recommendedName>
    <alternativeName>
        <fullName evidence="1">Ribosomal back-translocase LepA</fullName>
    </alternativeName>
</protein>
<feature type="chain" id="PRO_1000032063" description="Elongation factor 4">
    <location>
        <begin position="1"/>
        <end position="610"/>
    </location>
</feature>
<feature type="domain" description="tr-type G">
    <location>
        <begin position="12"/>
        <end position="194"/>
    </location>
</feature>
<feature type="binding site" evidence="1">
    <location>
        <begin position="24"/>
        <end position="29"/>
    </location>
    <ligand>
        <name>GTP</name>
        <dbReference type="ChEBI" id="CHEBI:37565"/>
    </ligand>
</feature>
<feature type="binding site" evidence="1">
    <location>
        <begin position="141"/>
        <end position="144"/>
    </location>
    <ligand>
        <name>GTP</name>
        <dbReference type="ChEBI" id="CHEBI:37565"/>
    </ligand>
</feature>
<comment type="function">
    <text evidence="1">Required for accurate and efficient protein synthesis under certain stress conditions. May act as a fidelity factor of the translation reaction, by catalyzing a one-codon backward translocation of tRNAs on improperly translocated ribosomes. Back-translocation proceeds from a post-translocation (POST) complex to a pre-translocation (PRE) complex, thus giving elongation factor G a second chance to translocate the tRNAs correctly. Binds to ribosomes in a GTP-dependent manner.</text>
</comment>
<comment type="catalytic activity">
    <reaction evidence="1">
        <text>GTP + H2O = GDP + phosphate + H(+)</text>
        <dbReference type="Rhea" id="RHEA:19669"/>
        <dbReference type="ChEBI" id="CHEBI:15377"/>
        <dbReference type="ChEBI" id="CHEBI:15378"/>
        <dbReference type="ChEBI" id="CHEBI:37565"/>
        <dbReference type="ChEBI" id="CHEBI:43474"/>
        <dbReference type="ChEBI" id="CHEBI:58189"/>
        <dbReference type="EC" id="3.6.5.n1"/>
    </reaction>
</comment>
<comment type="subcellular location">
    <subcellularLocation>
        <location evidence="1">Cell membrane</location>
        <topology evidence="1">Peripheral membrane protein</topology>
        <orientation evidence="1">Cytoplasmic side</orientation>
    </subcellularLocation>
</comment>
<comment type="similarity">
    <text evidence="1">Belongs to the TRAFAC class translation factor GTPase superfamily. Classic translation factor GTPase family. LepA subfamily.</text>
</comment>
<accession>Q03KW7</accession>
<gene>
    <name evidence="1" type="primary">lepA</name>
    <name type="ordered locus">STER_0932</name>
</gene>
<evidence type="ECO:0000255" key="1">
    <source>
        <dbReference type="HAMAP-Rule" id="MF_00071"/>
    </source>
</evidence>
<name>LEPA_STRTD</name>